<name>DUT_BUCBP</name>
<accession>P59408</accession>
<keyword id="KW-0378">Hydrolase</keyword>
<keyword id="KW-0460">Magnesium</keyword>
<keyword id="KW-0479">Metal-binding</keyword>
<keyword id="KW-0546">Nucleotide metabolism</keyword>
<keyword id="KW-1185">Reference proteome</keyword>
<gene>
    <name evidence="1" type="primary">dut</name>
    <name type="ordered locus">bbp_507</name>
</gene>
<dbReference type="EC" id="3.6.1.23" evidence="1"/>
<dbReference type="EMBL" id="AE016826">
    <property type="protein sequence ID" value="AAO27210.1"/>
    <property type="molecule type" value="Genomic_DNA"/>
</dbReference>
<dbReference type="RefSeq" id="WP_011091611.1">
    <property type="nucleotide sequence ID" value="NC_004545.1"/>
</dbReference>
<dbReference type="SMR" id="P59408"/>
<dbReference type="STRING" id="224915.bbp_507"/>
<dbReference type="KEGG" id="bab:bbp_507"/>
<dbReference type="eggNOG" id="COG0756">
    <property type="taxonomic scope" value="Bacteria"/>
</dbReference>
<dbReference type="HOGENOM" id="CLU_068508_1_1_6"/>
<dbReference type="OrthoDB" id="9809956at2"/>
<dbReference type="UniPathway" id="UPA00610">
    <property type="reaction ID" value="UER00666"/>
</dbReference>
<dbReference type="Proteomes" id="UP000000601">
    <property type="component" value="Chromosome"/>
</dbReference>
<dbReference type="GO" id="GO:0004170">
    <property type="term" value="F:dUTP diphosphatase activity"/>
    <property type="evidence" value="ECO:0007669"/>
    <property type="project" value="UniProtKB-UniRule"/>
</dbReference>
<dbReference type="GO" id="GO:0000287">
    <property type="term" value="F:magnesium ion binding"/>
    <property type="evidence" value="ECO:0007669"/>
    <property type="project" value="UniProtKB-UniRule"/>
</dbReference>
<dbReference type="GO" id="GO:0006226">
    <property type="term" value="P:dUMP biosynthetic process"/>
    <property type="evidence" value="ECO:0007669"/>
    <property type="project" value="UniProtKB-UniRule"/>
</dbReference>
<dbReference type="GO" id="GO:0046081">
    <property type="term" value="P:dUTP catabolic process"/>
    <property type="evidence" value="ECO:0007669"/>
    <property type="project" value="InterPro"/>
</dbReference>
<dbReference type="CDD" id="cd07557">
    <property type="entry name" value="trimeric_dUTPase"/>
    <property type="match status" value="1"/>
</dbReference>
<dbReference type="FunFam" id="2.70.40.10:FF:000002">
    <property type="entry name" value="dUTP diphosphatase"/>
    <property type="match status" value="1"/>
</dbReference>
<dbReference type="Gene3D" id="2.70.40.10">
    <property type="match status" value="1"/>
</dbReference>
<dbReference type="HAMAP" id="MF_00116">
    <property type="entry name" value="dUTPase_bact"/>
    <property type="match status" value="1"/>
</dbReference>
<dbReference type="InterPro" id="IPR008181">
    <property type="entry name" value="dUTPase"/>
</dbReference>
<dbReference type="InterPro" id="IPR029054">
    <property type="entry name" value="dUTPase-like"/>
</dbReference>
<dbReference type="InterPro" id="IPR036157">
    <property type="entry name" value="dUTPase-like_sf"/>
</dbReference>
<dbReference type="InterPro" id="IPR033704">
    <property type="entry name" value="dUTPase_trimeric"/>
</dbReference>
<dbReference type="NCBIfam" id="TIGR00576">
    <property type="entry name" value="dut"/>
    <property type="match status" value="1"/>
</dbReference>
<dbReference type="NCBIfam" id="NF001862">
    <property type="entry name" value="PRK00601.1"/>
    <property type="match status" value="1"/>
</dbReference>
<dbReference type="PANTHER" id="PTHR11241">
    <property type="entry name" value="DEOXYURIDINE 5'-TRIPHOSPHATE NUCLEOTIDOHYDROLASE"/>
    <property type="match status" value="1"/>
</dbReference>
<dbReference type="PANTHER" id="PTHR11241:SF0">
    <property type="entry name" value="DEOXYURIDINE 5'-TRIPHOSPHATE NUCLEOTIDOHYDROLASE"/>
    <property type="match status" value="1"/>
</dbReference>
<dbReference type="Pfam" id="PF00692">
    <property type="entry name" value="dUTPase"/>
    <property type="match status" value="1"/>
</dbReference>
<dbReference type="SUPFAM" id="SSF51283">
    <property type="entry name" value="dUTPase-like"/>
    <property type="match status" value="1"/>
</dbReference>
<sequence>MKKIKIKILDDRIGTQFSLPSYATSGSSGLDLRACIKDSIILLPNETVLIPTGIAVYIDDPYITAIILPRSGLGHVQGIVLGNLVGLIDSDYQGQVMVSLWNRGSRNFSVKVGMRIAQIVFIPIIRPIFEIVTNFVVDTERKVQGFGHSGVK</sequence>
<reference key="1">
    <citation type="journal article" date="2003" name="Proc. Natl. Acad. Sci. U.S.A.">
        <title>Reductive genome evolution in Buchnera aphidicola.</title>
        <authorList>
            <person name="van Ham R.C.H.J."/>
            <person name="Kamerbeek J."/>
            <person name="Palacios C."/>
            <person name="Rausell C."/>
            <person name="Abascal F."/>
            <person name="Bastolla U."/>
            <person name="Fernandez J.M."/>
            <person name="Jimenez L."/>
            <person name="Postigo M."/>
            <person name="Silva F.J."/>
            <person name="Tamames J."/>
            <person name="Viguera E."/>
            <person name="Latorre A."/>
            <person name="Valencia A."/>
            <person name="Moran F."/>
            <person name="Moya A."/>
        </authorList>
    </citation>
    <scope>NUCLEOTIDE SEQUENCE [LARGE SCALE GENOMIC DNA]</scope>
    <source>
        <strain>Bp</strain>
    </source>
</reference>
<proteinExistence type="inferred from homology"/>
<evidence type="ECO:0000255" key="1">
    <source>
        <dbReference type="HAMAP-Rule" id="MF_00116"/>
    </source>
</evidence>
<feature type="chain" id="PRO_0000182839" description="Deoxyuridine 5'-triphosphate nucleotidohydrolase">
    <location>
        <begin position="1"/>
        <end position="152"/>
    </location>
</feature>
<feature type="binding site" evidence="1">
    <location>
        <begin position="70"/>
        <end position="72"/>
    </location>
    <ligand>
        <name>substrate</name>
    </ligand>
</feature>
<feature type="binding site" evidence="1">
    <location>
        <position position="83"/>
    </location>
    <ligand>
        <name>substrate</name>
    </ligand>
</feature>
<feature type="binding site" evidence="1">
    <location>
        <begin position="87"/>
        <end position="89"/>
    </location>
    <ligand>
        <name>substrate</name>
    </ligand>
</feature>
<feature type="binding site" evidence="1">
    <location>
        <position position="97"/>
    </location>
    <ligand>
        <name>substrate</name>
    </ligand>
</feature>
<organism>
    <name type="scientific">Buchnera aphidicola subsp. Baizongia pistaciae (strain Bp)</name>
    <dbReference type="NCBI Taxonomy" id="224915"/>
    <lineage>
        <taxon>Bacteria</taxon>
        <taxon>Pseudomonadati</taxon>
        <taxon>Pseudomonadota</taxon>
        <taxon>Gammaproteobacteria</taxon>
        <taxon>Enterobacterales</taxon>
        <taxon>Erwiniaceae</taxon>
        <taxon>Buchnera</taxon>
    </lineage>
</organism>
<comment type="function">
    <text evidence="1">This enzyme is involved in nucleotide metabolism: it produces dUMP, the immediate precursor of thymidine nucleotides and it decreases the intracellular concentration of dUTP so that uracil cannot be incorporated into DNA.</text>
</comment>
<comment type="catalytic activity">
    <reaction evidence="1">
        <text>dUTP + H2O = dUMP + diphosphate + H(+)</text>
        <dbReference type="Rhea" id="RHEA:10248"/>
        <dbReference type="ChEBI" id="CHEBI:15377"/>
        <dbReference type="ChEBI" id="CHEBI:15378"/>
        <dbReference type="ChEBI" id="CHEBI:33019"/>
        <dbReference type="ChEBI" id="CHEBI:61555"/>
        <dbReference type="ChEBI" id="CHEBI:246422"/>
        <dbReference type="EC" id="3.6.1.23"/>
    </reaction>
</comment>
<comment type="cofactor">
    <cofactor evidence="1">
        <name>Mg(2+)</name>
        <dbReference type="ChEBI" id="CHEBI:18420"/>
    </cofactor>
</comment>
<comment type="pathway">
    <text evidence="1">Pyrimidine metabolism; dUMP biosynthesis; dUMP from dCTP (dUTP route): step 2/2.</text>
</comment>
<comment type="similarity">
    <text evidence="1">Belongs to the dUTPase family.</text>
</comment>
<protein>
    <recommendedName>
        <fullName evidence="1">Deoxyuridine 5'-triphosphate nucleotidohydrolase</fullName>
        <shortName evidence="1">dUTPase</shortName>
        <ecNumber evidence="1">3.6.1.23</ecNumber>
    </recommendedName>
    <alternativeName>
        <fullName evidence="1">dUTP pyrophosphatase</fullName>
    </alternativeName>
</protein>